<name>OTCC_MYCPN</name>
<accession>P75473</accession>
<feature type="chain" id="PRO_0000112954" description="Ornithine carbamoyltransferase, catabolic">
    <location>
        <begin position="1"/>
        <end position="346"/>
    </location>
</feature>
<feature type="binding site" evidence="2">
    <location>
        <begin position="58"/>
        <end position="61"/>
    </location>
    <ligand>
        <name>carbamoyl phosphate</name>
        <dbReference type="ChEBI" id="CHEBI:58228"/>
    </ligand>
</feature>
<feature type="binding site" evidence="2">
    <location>
        <position position="85"/>
    </location>
    <ligand>
        <name>carbamoyl phosphate</name>
        <dbReference type="ChEBI" id="CHEBI:58228"/>
    </ligand>
</feature>
<feature type="binding site" evidence="2">
    <location>
        <position position="109"/>
    </location>
    <ligand>
        <name>carbamoyl phosphate</name>
        <dbReference type="ChEBI" id="CHEBI:58228"/>
    </ligand>
</feature>
<feature type="binding site" evidence="2">
    <location>
        <begin position="136"/>
        <end position="139"/>
    </location>
    <ligand>
        <name>carbamoyl phosphate</name>
        <dbReference type="ChEBI" id="CHEBI:58228"/>
    </ligand>
</feature>
<feature type="binding site" evidence="2">
    <location>
        <position position="168"/>
    </location>
    <ligand>
        <name>L-ornithine</name>
        <dbReference type="ChEBI" id="CHEBI:46911"/>
    </ligand>
</feature>
<feature type="binding site" evidence="2">
    <location>
        <position position="239"/>
    </location>
    <ligand>
        <name>L-ornithine</name>
        <dbReference type="ChEBI" id="CHEBI:46911"/>
    </ligand>
</feature>
<feature type="binding site" evidence="2">
    <location>
        <begin position="243"/>
        <end position="244"/>
    </location>
    <ligand>
        <name>L-ornithine</name>
        <dbReference type="ChEBI" id="CHEBI:46911"/>
    </ligand>
</feature>
<feature type="binding site" evidence="2">
    <location>
        <begin position="280"/>
        <end position="281"/>
    </location>
    <ligand>
        <name>carbamoyl phosphate</name>
        <dbReference type="ChEBI" id="CHEBI:58228"/>
    </ligand>
</feature>
<feature type="binding site" evidence="2">
    <location>
        <position position="332"/>
    </location>
    <ligand>
        <name>carbamoyl phosphate</name>
        <dbReference type="ChEBI" id="CHEBI:58228"/>
    </ligand>
</feature>
<gene>
    <name evidence="2" type="primary">arcB</name>
    <name type="ordered locus">MPN_306</name>
    <name type="ORF">MP530</name>
</gene>
<organism>
    <name type="scientific">Mycoplasma pneumoniae (strain ATCC 29342 / M129 / Subtype 1)</name>
    <name type="common">Mycoplasmoides pneumoniae</name>
    <dbReference type="NCBI Taxonomy" id="272634"/>
    <lineage>
        <taxon>Bacteria</taxon>
        <taxon>Bacillati</taxon>
        <taxon>Mycoplasmatota</taxon>
        <taxon>Mycoplasmoidales</taxon>
        <taxon>Mycoplasmoidaceae</taxon>
        <taxon>Mycoplasmoides</taxon>
    </lineage>
</organism>
<proteinExistence type="inferred from homology"/>
<comment type="function">
    <text evidence="1">Reversibly catalyzes the transfer of the carbamoyl group from carbamoyl phosphate (CP) to the N(epsilon) atom of ornithine (ORN) to produce L-citrulline.</text>
</comment>
<comment type="catalytic activity">
    <reaction evidence="2">
        <text>carbamoyl phosphate + L-ornithine = L-citrulline + phosphate + H(+)</text>
        <dbReference type="Rhea" id="RHEA:19513"/>
        <dbReference type="ChEBI" id="CHEBI:15378"/>
        <dbReference type="ChEBI" id="CHEBI:43474"/>
        <dbReference type="ChEBI" id="CHEBI:46911"/>
        <dbReference type="ChEBI" id="CHEBI:57743"/>
        <dbReference type="ChEBI" id="CHEBI:58228"/>
        <dbReference type="EC" id="2.1.3.3"/>
    </reaction>
</comment>
<comment type="pathway">
    <text evidence="2">Amino-acid degradation; L-arginine degradation via ADI pathway; carbamoyl phosphate from L-arginine: step 2/2.</text>
</comment>
<comment type="subcellular location">
    <subcellularLocation>
        <location evidence="2">Cytoplasm</location>
    </subcellularLocation>
</comment>
<comment type="similarity">
    <text evidence="2">Belongs to the aspartate/ornithine carbamoyltransferase superfamily. OTCase family.</text>
</comment>
<comment type="sequence caution" evidence="3">
    <conflict type="frameshift">
        <sequence resource="EMBL-CDS" id="AAB96178"/>
    </conflict>
</comment>
<dbReference type="EC" id="2.1.3.3" evidence="2"/>
<dbReference type="EMBL" id="U00089">
    <property type="protein sequence ID" value="AAB96178.1"/>
    <property type="status" value="ALT_FRAME"/>
    <property type="molecule type" value="Genomic_DNA"/>
</dbReference>
<dbReference type="PIR" id="S73856">
    <property type="entry name" value="S73856"/>
</dbReference>
<dbReference type="RefSeq" id="YP_009121719.1">
    <property type="nucleotide sequence ID" value="NC_000912.1"/>
</dbReference>
<dbReference type="SMR" id="P75473"/>
<dbReference type="IntAct" id="P75473">
    <property type="interactions" value="2"/>
</dbReference>
<dbReference type="STRING" id="272634.MPN_306"/>
<dbReference type="EnsemblBacteria" id="AAB96178">
    <property type="protein sequence ID" value="AAB96178"/>
    <property type="gene ID" value="MPN_306"/>
</dbReference>
<dbReference type="KEGG" id="mpn:MPN_306"/>
<dbReference type="PATRIC" id="fig|272634.6.peg.330"/>
<dbReference type="HOGENOM" id="CLU_043846_3_1_14"/>
<dbReference type="OrthoDB" id="9802587at2"/>
<dbReference type="BioCyc" id="MetaCyc:MONOMER-533"/>
<dbReference type="UniPathway" id="UPA00254">
    <property type="reaction ID" value="UER00365"/>
</dbReference>
<dbReference type="Proteomes" id="UP000000808">
    <property type="component" value="Chromosome"/>
</dbReference>
<dbReference type="GO" id="GO:0005737">
    <property type="term" value="C:cytoplasm"/>
    <property type="evidence" value="ECO:0007669"/>
    <property type="project" value="UniProtKB-SubCell"/>
</dbReference>
<dbReference type="GO" id="GO:0016597">
    <property type="term" value="F:amino acid binding"/>
    <property type="evidence" value="ECO:0007669"/>
    <property type="project" value="InterPro"/>
</dbReference>
<dbReference type="GO" id="GO:0004585">
    <property type="term" value="F:ornithine carbamoyltransferase activity"/>
    <property type="evidence" value="ECO:0007669"/>
    <property type="project" value="UniProtKB-UniRule"/>
</dbReference>
<dbReference type="GO" id="GO:0042450">
    <property type="term" value="P:arginine biosynthetic process via ornithine"/>
    <property type="evidence" value="ECO:0007669"/>
    <property type="project" value="TreeGrafter"/>
</dbReference>
<dbReference type="GO" id="GO:0019547">
    <property type="term" value="P:arginine catabolic process to ornithine"/>
    <property type="evidence" value="ECO:0007669"/>
    <property type="project" value="UniProtKB-UniRule"/>
</dbReference>
<dbReference type="GO" id="GO:0019240">
    <property type="term" value="P:citrulline biosynthetic process"/>
    <property type="evidence" value="ECO:0007669"/>
    <property type="project" value="TreeGrafter"/>
</dbReference>
<dbReference type="Gene3D" id="3.40.50.1370">
    <property type="entry name" value="Aspartate/ornithine carbamoyltransferase"/>
    <property type="match status" value="2"/>
</dbReference>
<dbReference type="HAMAP" id="MF_01109">
    <property type="entry name" value="OTCase"/>
    <property type="match status" value="1"/>
</dbReference>
<dbReference type="InterPro" id="IPR006132">
    <property type="entry name" value="Asp/Orn_carbamoyltranf_P-bd"/>
</dbReference>
<dbReference type="InterPro" id="IPR006130">
    <property type="entry name" value="Asp/Orn_carbamoylTrfase"/>
</dbReference>
<dbReference type="InterPro" id="IPR036901">
    <property type="entry name" value="Asp/Orn_carbamoylTrfase_sf"/>
</dbReference>
<dbReference type="InterPro" id="IPR006131">
    <property type="entry name" value="Asp_carbamoyltransf_Asp/Orn-bd"/>
</dbReference>
<dbReference type="InterPro" id="IPR002292">
    <property type="entry name" value="Orn/put_carbamltrans"/>
</dbReference>
<dbReference type="InterPro" id="IPR024904">
    <property type="entry name" value="OTCase_ArgI"/>
</dbReference>
<dbReference type="NCBIfam" id="TIGR00658">
    <property type="entry name" value="orni_carb_tr"/>
    <property type="match status" value="1"/>
</dbReference>
<dbReference type="PANTHER" id="PTHR45753:SF1">
    <property type="entry name" value="ORNITHINE CARBAMOYLTRANSFERASE, CATABOLIC"/>
    <property type="match status" value="1"/>
</dbReference>
<dbReference type="PANTHER" id="PTHR45753">
    <property type="entry name" value="ORNITHINE CARBAMOYLTRANSFERASE, MITOCHONDRIAL"/>
    <property type="match status" value="1"/>
</dbReference>
<dbReference type="Pfam" id="PF00185">
    <property type="entry name" value="OTCace"/>
    <property type="match status" value="1"/>
</dbReference>
<dbReference type="Pfam" id="PF02729">
    <property type="entry name" value="OTCace_N"/>
    <property type="match status" value="1"/>
</dbReference>
<dbReference type="PRINTS" id="PR00100">
    <property type="entry name" value="AOTCASE"/>
</dbReference>
<dbReference type="PRINTS" id="PR00102">
    <property type="entry name" value="OTCASE"/>
</dbReference>
<dbReference type="SUPFAM" id="SSF53671">
    <property type="entry name" value="Aspartate/ornithine carbamoyltransferase"/>
    <property type="match status" value="1"/>
</dbReference>
<dbReference type="PROSITE" id="PS00097">
    <property type="entry name" value="CARBAMOYLTRANSFERASE"/>
    <property type="match status" value="1"/>
</dbReference>
<keyword id="KW-0056">Arginine metabolism</keyword>
<keyword id="KW-0963">Cytoplasm</keyword>
<keyword id="KW-1185">Reference proteome</keyword>
<keyword id="KW-0808">Transferase</keyword>
<sequence length="346" mass="38149">MPINLKGRSLDSALNFTTAQINYLIDLAIDLNAVNTKLHIQNRPLAGKNIVLLFQKDSTRTRCAFEVAAFDLGMGCTYIGPSGSNFGKKESIEDTAKVLGSMYDGIEFRGFKQSDVDALVKYSGVPVWNGLTDAEHPTQMLADYMTIKELKGDLKGRKIVFAGDIKNNVARSLMIGAAFVGMDIVLVGPKAQHELVQNGAGYKEVFEQCQALFQLNGGSVSFSTDKLQAAKNADVIYTDVWLSLGEDFSLFEERIQELGQFQVDMAMIKAAKSDVIFLHCLPAFHDDHTSFSLEIKQKLGKKYPVVKTGAMEVTDTVFQSKHNMAFIQAENRLHTIKAVILATLGY</sequence>
<protein>
    <recommendedName>
        <fullName evidence="2">Ornithine carbamoyltransferase, catabolic</fullName>
        <shortName evidence="2">OTCase</shortName>
        <ecNumber evidence="2">2.1.3.3</ecNumber>
    </recommendedName>
</protein>
<evidence type="ECO:0000250" key="1"/>
<evidence type="ECO:0000255" key="2">
    <source>
        <dbReference type="HAMAP-Rule" id="MF_01109"/>
    </source>
</evidence>
<evidence type="ECO:0000305" key="3"/>
<reference key="1">
    <citation type="journal article" date="1996" name="Nucleic Acids Res.">
        <title>Complete sequence analysis of the genome of the bacterium Mycoplasma pneumoniae.</title>
        <authorList>
            <person name="Himmelreich R."/>
            <person name="Hilbert H."/>
            <person name="Plagens H."/>
            <person name="Pirkl E."/>
            <person name="Li B.-C."/>
            <person name="Herrmann R."/>
        </authorList>
    </citation>
    <scope>NUCLEOTIDE SEQUENCE [LARGE SCALE GENOMIC DNA]</scope>
    <source>
        <strain>ATCC 29342 / M129 / Subtype 1</strain>
    </source>
</reference>